<keyword id="KW-0433">Leucine-rich repeat</keyword>
<keyword id="KW-0509">mRNA transport</keyword>
<keyword id="KW-0539">Nucleus</keyword>
<keyword id="KW-1185">Reference proteome</keyword>
<keyword id="KW-0677">Repeat</keyword>
<keyword id="KW-0694">RNA-binding</keyword>
<keyword id="KW-0813">Transport</keyword>
<organism>
    <name type="scientific">Caenorhabditis elegans</name>
    <dbReference type="NCBI Taxonomy" id="6239"/>
    <lineage>
        <taxon>Eukaryota</taxon>
        <taxon>Metazoa</taxon>
        <taxon>Ecdysozoa</taxon>
        <taxon>Nematoda</taxon>
        <taxon>Chromadorea</taxon>
        <taxon>Rhabditida</taxon>
        <taxon>Rhabditina</taxon>
        <taxon>Rhabditomorpha</taxon>
        <taxon>Rhabditoidea</taxon>
        <taxon>Rhabditidae</taxon>
        <taxon>Peloderinae</taxon>
        <taxon>Caenorhabditis</taxon>
    </lineage>
</organism>
<reference key="1">
    <citation type="journal article" date="1998" name="Science">
        <title>Genome sequence of the nematode C. elegans: a platform for investigating biology.</title>
        <authorList>
            <consortium name="The C. elegans sequencing consortium"/>
        </authorList>
    </citation>
    <scope>NUCLEOTIDE SEQUENCE [LARGE SCALE GENOMIC DNA]</scope>
    <source>
        <strain>Bristol N2</strain>
    </source>
</reference>
<reference key="2">
    <citation type="journal article" date="2000" name="RNA">
        <title>The mRNA export in Caenorhabditis elegans is mediated by Ce-NXF-1, an ortholog of human TAP/NXF and Saccharomyces cerevisiae Mex67p.</title>
        <authorList>
            <person name="Tan W."/>
            <person name="Zolotukhin A.S."/>
            <person name="Bear J."/>
            <person name="Patenaude D.J."/>
            <person name="Felber B.K."/>
        </authorList>
    </citation>
    <scope>CHARACTERIZATION</scope>
</reference>
<evidence type="ECO:0000250" key="1"/>
<evidence type="ECO:0000255" key="2">
    <source>
        <dbReference type="PROSITE-ProRule" id="PRU00137"/>
    </source>
</evidence>
<evidence type="ECO:0000255" key="3">
    <source>
        <dbReference type="PROSITE-ProRule" id="PRU00611"/>
    </source>
</evidence>
<evidence type="ECO:0000256" key="4">
    <source>
        <dbReference type="SAM" id="MobiDB-lite"/>
    </source>
</evidence>
<evidence type="ECO:0000305" key="5"/>
<proteinExistence type="evidence at protein level"/>
<gene>
    <name type="primary">nxf-1</name>
    <name type="ORF">C15H11.3</name>
</gene>
<sequence length="628" mass="70962">MERDGCFGNCWLRRWEKSDMNRKGFGGHRDAKQLSRTKNRFARLDPDTQSRYEDDDEPAVPVRASLTSASSRGRGGSSRGFGQSAASIANTGVRNADIVYKCRATGAAKKVDAKWLIKQLNQIIENFKPLLWTDNARGDFEWYVRDEDTASTIRANNRRVVHKESGTRVEFYTSKVPAPWMKLKREEIEIIHRVVDKRHNAENRVLDLSNFHEDEEFKAKDMMMNLTKGNVMLTVLDHIDDKYGNIVALSLSNNRIRHLDYASALVSIAKFVMELDLSHNHISTEKELEKFAGLPVERFFFEGNPVVESFTQRAAYISYIHQSFPRCNMLDGVEVQPLVVGPDLDIHDAMPFRAGYYPNPQIRVLVEQFVTSYFDFYDGPDGQRTRRNLHNAYDADASTFSLTIEHLRGSSHARHHNDECFAQYAGVSHNVLKQERFARHRASRSARGAMDIAVALSKLPTSSHMRDTFIVDVFLQSNDLLGFTVQGLFCDGDLTQTPSPSFFSRSFLVSPRENDSVAVISDQLFITVASLDRLEKFKKLYDQSIANGAAVEQVSAVQIAQIGVNGMGFDGAPALPIREEMIKAMCQFSGMIPPFSEKCLADCAWNFDFACQKFNEIKSSVPAEAFAH</sequence>
<dbReference type="EMBL" id="Z81035">
    <property type="protein sequence ID" value="CAB02734.1"/>
    <property type="molecule type" value="Genomic_DNA"/>
</dbReference>
<dbReference type="PIR" id="T19316">
    <property type="entry name" value="T19316"/>
</dbReference>
<dbReference type="RefSeq" id="NP_506567.1">
    <property type="nucleotide sequence ID" value="NM_074166.3"/>
</dbReference>
<dbReference type="SMR" id="Q9XVS7"/>
<dbReference type="BioGRID" id="56231">
    <property type="interactions" value="35"/>
</dbReference>
<dbReference type="FunCoup" id="Q9XVS7">
    <property type="interactions" value="2287"/>
</dbReference>
<dbReference type="STRING" id="6239.C15H11.3.1"/>
<dbReference type="PaxDb" id="6239-C15H11.3a"/>
<dbReference type="UCSC" id="C15H11.3">
    <property type="organism name" value="c. elegans"/>
</dbReference>
<dbReference type="WormBase" id="C15H11.3a">
    <property type="protein sequence ID" value="CE08180"/>
    <property type="gene ID" value="WBGene00003834"/>
    <property type="gene designation" value="nxf-1"/>
</dbReference>
<dbReference type="eggNOG" id="KOG3763">
    <property type="taxonomic scope" value="Eukaryota"/>
</dbReference>
<dbReference type="InParanoid" id="Q9XVS7"/>
<dbReference type="OMA" id="KLEWAPW"/>
<dbReference type="PhylomeDB" id="Q9XVS7"/>
<dbReference type="Reactome" id="R-CEL-159236">
    <property type="pathway name" value="Transport of Mature mRNA derived from an Intron-Containing Transcript"/>
</dbReference>
<dbReference type="PRO" id="PR:Q9XVS7"/>
<dbReference type="Proteomes" id="UP000001940">
    <property type="component" value="Chromosome V"/>
</dbReference>
<dbReference type="GO" id="GO:0005737">
    <property type="term" value="C:cytoplasm"/>
    <property type="evidence" value="ECO:0007669"/>
    <property type="project" value="InterPro"/>
</dbReference>
<dbReference type="GO" id="GO:0005635">
    <property type="term" value="C:nuclear envelope"/>
    <property type="evidence" value="ECO:0000314"/>
    <property type="project" value="WormBase"/>
</dbReference>
<dbReference type="GO" id="GO:0005643">
    <property type="term" value="C:nuclear pore"/>
    <property type="evidence" value="ECO:0000314"/>
    <property type="project" value="WormBase"/>
</dbReference>
<dbReference type="GO" id="GO:0005730">
    <property type="term" value="C:nucleolus"/>
    <property type="evidence" value="ECO:0000314"/>
    <property type="project" value="WormBase"/>
</dbReference>
<dbReference type="GO" id="GO:0005654">
    <property type="term" value="C:nucleoplasm"/>
    <property type="evidence" value="ECO:0000314"/>
    <property type="project" value="WormBase"/>
</dbReference>
<dbReference type="GO" id="GO:0005634">
    <property type="term" value="C:nucleus"/>
    <property type="evidence" value="ECO:0000318"/>
    <property type="project" value="GO_Central"/>
</dbReference>
<dbReference type="GO" id="GO:0003723">
    <property type="term" value="F:RNA binding"/>
    <property type="evidence" value="ECO:0000318"/>
    <property type="project" value="GO_Central"/>
</dbReference>
<dbReference type="GO" id="GO:0016973">
    <property type="term" value="P:poly(A)+ mRNA export from nucleus"/>
    <property type="evidence" value="ECO:0000318"/>
    <property type="project" value="GO_Central"/>
</dbReference>
<dbReference type="CDD" id="cd14342">
    <property type="entry name" value="UBA_TAP-C"/>
    <property type="match status" value="1"/>
</dbReference>
<dbReference type="FunFam" id="1.10.8.10:FF:000018">
    <property type="entry name" value="Nuclear RNA export factor 1"/>
    <property type="match status" value="1"/>
</dbReference>
<dbReference type="FunFam" id="3.10.450.50:FF:000004">
    <property type="entry name" value="Nuclear RNA export factor 1"/>
    <property type="match status" value="1"/>
</dbReference>
<dbReference type="FunFam" id="3.30.70.330:FF:001168">
    <property type="entry name" value="Nuclear RNA export factor 1"/>
    <property type="match status" value="1"/>
</dbReference>
<dbReference type="FunFam" id="3.80.10.10:FF:000384">
    <property type="entry name" value="Nuclear RNA export factor 1"/>
    <property type="match status" value="1"/>
</dbReference>
<dbReference type="Gene3D" id="3.10.450.50">
    <property type="match status" value="1"/>
</dbReference>
<dbReference type="Gene3D" id="3.30.70.330">
    <property type="match status" value="1"/>
</dbReference>
<dbReference type="Gene3D" id="1.10.8.10">
    <property type="entry name" value="DNA helicase RuvA subunit, C-terminal domain"/>
    <property type="match status" value="1"/>
</dbReference>
<dbReference type="Gene3D" id="3.80.10.10">
    <property type="entry name" value="Ribonuclease Inhibitor"/>
    <property type="match status" value="1"/>
</dbReference>
<dbReference type="InterPro" id="IPR032675">
    <property type="entry name" value="LRR_dom_sf"/>
</dbReference>
<dbReference type="InterPro" id="IPR032710">
    <property type="entry name" value="NTF2-like_dom_sf"/>
</dbReference>
<dbReference type="InterPro" id="IPR002075">
    <property type="entry name" value="NTF2_dom"/>
</dbReference>
<dbReference type="InterPro" id="IPR018222">
    <property type="entry name" value="Nuclear_transport_factor_2_euk"/>
</dbReference>
<dbReference type="InterPro" id="IPR012677">
    <property type="entry name" value="Nucleotide-bd_a/b_plait_sf"/>
</dbReference>
<dbReference type="InterPro" id="IPR030217">
    <property type="entry name" value="NXF_fam"/>
</dbReference>
<dbReference type="InterPro" id="IPR035979">
    <property type="entry name" value="RBD_domain_sf"/>
</dbReference>
<dbReference type="InterPro" id="IPR005637">
    <property type="entry name" value="TAP_C_dom"/>
</dbReference>
<dbReference type="InterPro" id="IPR015245">
    <property type="entry name" value="Tap_RNA-bd"/>
</dbReference>
<dbReference type="InterPro" id="IPR009060">
    <property type="entry name" value="UBA-like_sf"/>
</dbReference>
<dbReference type="PANTHER" id="PTHR10662">
    <property type="entry name" value="NUCLEAR RNA EXPORT FACTOR"/>
    <property type="match status" value="1"/>
</dbReference>
<dbReference type="PANTHER" id="PTHR10662:SF22">
    <property type="entry name" value="NUCLEAR RNA EXPORT FACTOR 1"/>
    <property type="match status" value="1"/>
</dbReference>
<dbReference type="Pfam" id="PF24048">
    <property type="entry name" value="LRR_NXF1-5"/>
    <property type="match status" value="1"/>
</dbReference>
<dbReference type="Pfam" id="PF22602">
    <property type="entry name" value="NXF_NTF2"/>
    <property type="match status" value="1"/>
</dbReference>
<dbReference type="Pfam" id="PF09162">
    <property type="entry name" value="Tap-RNA_bind"/>
    <property type="match status" value="1"/>
</dbReference>
<dbReference type="Pfam" id="PF03943">
    <property type="entry name" value="TAP_C"/>
    <property type="match status" value="1"/>
</dbReference>
<dbReference type="SMART" id="SM00804">
    <property type="entry name" value="TAP_C"/>
    <property type="match status" value="1"/>
</dbReference>
<dbReference type="SUPFAM" id="SSF52058">
    <property type="entry name" value="L domain-like"/>
    <property type="match status" value="1"/>
</dbReference>
<dbReference type="SUPFAM" id="SSF54427">
    <property type="entry name" value="NTF2-like"/>
    <property type="match status" value="1"/>
</dbReference>
<dbReference type="SUPFAM" id="SSF54928">
    <property type="entry name" value="RNA-binding domain, RBD"/>
    <property type="match status" value="1"/>
</dbReference>
<dbReference type="SUPFAM" id="SSF46934">
    <property type="entry name" value="UBA-like"/>
    <property type="match status" value="1"/>
</dbReference>
<dbReference type="PROSITE" id="PS50177">
    <property type="entry name" value="NTF2_DOMAIN"/>
    <property type="match status" value="1"/>
</dbReference>
<dbReference type="PROSITE" id="PS51281">
    <property type="entry name" value="TAP_C"/>
    <property type="match status" value="1"/>
</dbReference>
<comment type="function">
    <text>Involved in RNA export from the nucleus to the cytoplasm.</text>
</comment>
<comment type="subunit">
    <text>Interacts with nucleoporins, Nup98, Nup153 and Nup214.</text>
</comment>
<comment type="subcellular location">
    <subcellularLocation>
        <location>Nucleus</location>
    </subcellularLocation>
    <text>Shuttle protein that accumulates in the nucleoplasm and at the nuclear rim.</text>
</comment>
<comment type="domain">
    <text evidence="1">The leucine-rich repeats and the NTF2-domain are essential for the export of mRNA from the nucleus.</text>
</comment>
<comment type="domain">
    <text>The C-terminal fragment, containing the TAP domain (also called UBA-like domain) and part of the NTF2-like domain, named the NPC-binding domain, mediates direct interactions with nucleoporin-FG-repeats and is necessary and sufficient for its localization to the nuclear rim.</text>
</comment>
<comment type="domain">
    <text>The RNA-binding domain is a non-canonical RNP-type domain.</text>
</comment>
<comment type="similarity">
    <text evidence="5">Belongs to the NXF family.</text>
</comment>
<protein>
    <recommendedName>
        <fullName>Nuclear RNA export factor 1</fullName>
    </recommendedName>
</protein>
<name>NXF1_CAEEL</name>
<feature type="chain" id="PRO_0000220536" description="Nuclear RNA export factor 1">
    <location>
        <begin position="1"/>
        <end position="628"/>
    </location>
</feature>
<feature type="domain" description="RRM">
    <location>
        <begin position="100"/>
        <end position="179"/>
    </location>
</feature>
<feature type="repeat" description="LRR 1">
    <location>
        <begin position="245"/>
        <end position="270"/>
    </location>
</feature>
<feature type="repeat" description="LRR 2">
    <location>
        <begin position="271"/>
        <end position="294"/>
    </location>
</feature>
<feature type="domain" description="NTF2" evidence="2">
    <location>
        <begin position="365"/>
        <end position="526"/>
    </location>
</feature>
<feature type="domain" description="TAP-C" evidence="3">
    <location>
        <begin position="576"/>
        <end position="628"/>
    </location>
</feature>
<feature type="region of interest" description="Disordered" evidence="4">
    <location>
        <begin position="47"/>
        <end position="83"/>
    </location>
</feature>
<feature type="compositionally biased region" description="Low complexity" evidence="4">
    <location>
        <begin position="63"/>
        <end position="72"/>
    </location>
</feature>
<accession>Q9XVS7</accession>